<keyword id="KW-0378">Hydrolase</keyword>
<proteinExistence type="inferred from homology"/>
<dbReference type="EC" id="3.6.1.41" evidence="1"/>
<dbReference type="EMBL" id="AM933172">
    <property type="protein sequence ID" value="CAR31677.1"/>
    <property type="molecule type" value="Genomic_DNA"/>
</dbReference>
<dbReference type="RefSeq" id="WP_000257211.1">
    <property type="nucleotide sequence ID" value="NC_011294.1"/>
</dbReference>
<dbReference type="SMR" id="B5R1S6"/>
<dbReference type="KEGG" id="set:SEN0090"/>
<dbReference type="HOGENOM" id="CLU_056184_2_0_6"/>
<dbReference type="Proteomes" id="UP000000613">
    <property type="component" value="Chromosome"/>
</dbReference>
<dbReference type="GO" id="GO:0008803">
    <property type="term" value="F:bis(5'-nucleosyl)-tetraphosphatase (symmetrical) activity"/>
    <property type="evidence" value="ECO:0007669"/>
    <property type="project" value="UniProtKB-UniRule"/>
</dbReference>
<dbReference type="CDD" id="cd07422">
    <property type="entry name" value="MPP_ApaH"/>
    <property type="match status" value="1"/>
</dbReference>
<dbReference type="FunFam" id="3.60.21.10:FF:000013">
    <property type="entry name" value="Bis(5'-nucleosyl)-tetraphosphatase, symmetrical"/>
    <property type="match status" value="1"/>
</dbReference>
<dbReference type="Gene3D" id="3.60.21.10">
    <property type="match status" value="1"/>
</dbReference>
<dbReference type="HAMAP" id="MF_00199">
    <property type="entry name" value="ApaH"/>
    <property type="match status" value="1"/>
</dbReference>
<dbReference type="InterPro" id="IPR004617">
    <property type="entry name" value="ApaH"/>
</dbReference>
<dbReference type="InterPro" id="IPR004843">
    <property type="entry name" value="Calcineurin-like_PHP_ApaH"/>
</dbReference>
<dbReference type="InterPro" id="IPR029052">
    <property type="entry name" value="Metallo-depent_PP-like"/>
</dbReference>
<dbReference type="NCBIfam" id="TIGR00668">
    <property type="entry name" value="apaH"/>
    <property type="match status" value="1"/>
</dbReference>
<dbReference type="NCBIfam" id="NF001204">
    <property type="entry name" value="PRK00166.1"/>
    <property type="match status" value="1"/>
</dbReference>
<dbReference type="PANTHER" id="PTHR40942">
    <property type="match status" value="1"/>
</dbReference>
<dbReference type="PANTHER" id="PTHR40942:SF4">
    <property type="entry name" value="CYTOCHROME C5"/>
    <property type="match status" value="1"/>
</dbReference>
<dbReference type="Pfam" id="PF00149">
    <property type="entry name" value="Metallophos"/>
    <property type="match status" value="1"/>
</dbReference>
<dbReference type="PIRSF" id="PIRSF000903">
    <property type="entry name" value="B5n-ttraPtase_sm"/>
    <property type="match status" value="1"/>
</dbReference>
<dbReference type="SUPFAM" id="SSF56300">
    <property type="entry name" value="Metallo-dependent phosphatases"/>
    <property type="match status" value="1"/>
</dbReference>
<protein>
    <recommendedName>
        <fullName evidence="1">Bis(5'-nucleosyl)-tetraphosphatase, symmetrical</fullName>
        <ecNumber evidence="1">3.6.1.41</ecNumber>
    </recommendedName>
    <alternativeName>
        <fullName evidence="1">Ap4A hydrolase</fullName>
    </alternativeName>
    <alternativeName>
        <fullName evidence="1">Diadenosine 5',5'''-P1,P4-tetraphosphate pyrophosphohydrolase</fullName>
    </alternativeName>
    <alternativeName>
        <fullName evidence="1">Diadenosine tetraphosphatase</fullName>
    </alternativeName>
</protein>
<evidence type="ECO:0000255" key="1">
    <source>
        <dbReference type="HAMAP-Rule" id="MF_00199"/>
    </source>
</evidence>
<organism>
    <name type="scientific">Salmonella enteritidis PT4 (strain P125109)</name>
    <dbReference type="NCBI Taxonomy" id="550537"/>
    <lineage>
        <taxon>Bacteria</taxon>
        <taxon>Pseudomonadati</taxon>
        <taxon>Pseudomonadota</taxon>
        <taxon>Gammaproteobacteria</taxon>
        <taxon>Enterobacterales</taxon>
        <taxon>Enterobacteriaceae</taxon>
        <taxon>Salmonella</taxon>
    </lineage>
</organism>
<feature type="chain" id="PRO_1000099332" description="Bis(5'-nucleosyl)-tetraphosphatase, symmetrical">
    <location>
        <begin position="1"/>
        <end position="282"/>
    </location>
</feature>
<accession>B5R1S6</accession>
<name>APAH_SALEP</name>
<gene>
    <name evidence="1" type="primary">apaH</name>
    <name type="ordered locus">SEN0090</name>
</gene>
<reference key="1">
    <citation type="journal article" date="2008" name="Genome Res.">
        <title>Comparative genome analysis of Salmonella enteritidis PT4 and Salmonella gallinarum 287/91 provides insights into evolutionary and host adaptation pathways.</title>
        <authorList>
            <person name="Thomson N.R."/>
            <person name="Clayton D.J."/>
            <person name="Windhorst D."/>
            <person name="Vernikos G."/>
            <person name="Davidson S."/>
            <person name="Churcher C."/>
            <person name="Quail M.A."/>
            <person name="Stevens M."/>
            <person name="Jones M.A."/>
            <person name="Watson M."/>
            <person name="Barron A."/>
            <person name="Layton A."/>
            <person name="Pickard D."/>
            <person name="Kingsley R.A."/>
            <person name="Bignell A."/>
            <person name="Clark L."/>
            <person name="Harris B."/>
            <person name="Ormond D."/>
            <person name="Abdellah Z."/>
            <person name="Brooks K."/>
            <person name="Cherevach I."/>
            <person name="Chillingworth T."/>
            <person name="Woodward J."/>
            <person name="Norberczak H."/>
            <person name="Lord A."/>
            <person name="Arrowsmith C."/>
            <person name="Jagels K."/>
            <person name="Moule S."/>
            <person name="Mungall K."/>
            <person name="Saunders M."/>
            <person name="Whitehead S."/>
            <person name="Chabalgoity J.A."/>
            <person name="Maskell D."/>
            <person name="Humphreys T."/>
            <person name="Roberts M."/>
            <person name="Barrow P.A."/>
            <person name="Dougan G."/>
            <person name="Parkhill J."/>
        </authorList>
    </citation>
    <scope>NUCLEOTIDE SEQUENCE [LARGE SCALE GENOMIC DNA]</scope>
    <source>
        <strain>P125109</strain>
    </source>
</reference>
<sequence>MATYLIGDVHGCYDELIALLQQVEFTPDTDTLWLTGDLVARGPGSLDVLRYVKSLGNSVRLVLGNHDLHLLAVFAGISRNKPKDRLTPLLEAPDADELLNWLRRQPLLQVDEEKKLVMAHAGITPQWDLQTAKECARDVEAVLSSDSYPFFLDAMYGDMPNNWSPELSGLARLRFITNAFTRMRYCFPNGQLDMYSKASPENAPAPLKPWFAIPGPVSEAYSIAFGHWASLEGKGTPEGIYALDTGCCWGGELTCLRWEDKQYFVQPSNRQMDMGEGEAVNA</sequence>
<comment type="function">
    <text evidence="1">Hydrolyzes diadenosine 5',5'''-P1,P4-tetraphosphate to yield ADP.</text>
</comment>
<comment type="catalytic activity">
    <reaction evidence="1">
        <text>P(1),P(4)-bis(5'-adenosyl) tetraphosphate + H2O = 2 ADP + 2 H(+)</text>
        <dbReference type="Rhea" id="RHEA:24252"/>
        <dbReference type="ChEBI" id="CHEBI:15377"/>
        <dbReference type="ChEBI" id="CHEBI:15378"/>
        <dbReference type="ChEBI" id="CHEBI:58141"/>
        <dbReference type="ChEBI" id="CHEBI:456216"/>
        <dbReference type="EC" id="3.6.1.41"/>
    </reaction>
</comment>
<comment type="similarity">
    <text evidence="1">Belongs to the Ap4A hydrolase family.</text>
</comment>